<proteinExistence type="evidence at protein level"/>
<dbReference type="EMBL" id="U00096">
    <property type="protein sequence ID" value="QNV50535.1"/>
    <property type="molecule type" value="Genomic_DNA"/>
</dbReference>
<dbReference type="InParanoid" id="P0DSG0"/>
<dbReference type="BioCyc" id="EcoCyc:MONOMER0-4494"/>
<dbReference type="Proteomes" id="UP000000625">
    <property type="component" value="Chromosome"/>
</dbReference>
<dbReference type="InterPro" id="IPR054453">
    <property type="entry name" value="PssL-like"/>
</dbReference>
<dbReference type="Pfam" id="PF22869">
    <property type="entry name" value="PssL"/>
    <property type="match status" value="1"/>
</dbReference>
<protein>
    <recommendedName>
        <fullName evidence="2">Protein PssL</fullName>
    </recommendedName>
</protein>
<feature type="chain" id="PRO_0000447140" description="Protein PssL">
    <location>
        <begin position="1"/>
        <end position="13"/>
    </location>
</feature>
<reference key="1">
    <citation type="journal article" date="1997" name="Science">
        <title>The complete genome sequence of Escherichia coli K-12.</title>
        <authorList>
            <person name="Blattner F.R."/>
            <person name="Plunkett G. III"/>
            <person name="Bloch C.A."/>
            <person name="Perna N.T."/>
            <person name="Burland V."/>
            <person name="Riley M."/>
            <person name="Collado-Vides J."/>
            <person name="Glasner J.D."/>
            <person name="Rode C.K."/>
            <person name="Mayhew G.F."/>
            <person name="Gregor J."/>
            <person name="Davis N.W."/>
            <person name="Kirkpatrick H.A."/>
            <person name="Goeden M.A."/>
            <person name="Rose D.J."/>
            <person name="Mau B."/>
            <person name="Shao Y."/>
        </authorList>
    </citation>
    <scope>NUCLEOTIDE SEQUENCE [LARGE SCALE GENOMIC DNA]</scope>
    <source>
        <strain>K12 / MG1655 / ATCC 47076</strain>
    </source>
</reference>
<reference key="2">
    <citation type="journal article" date="2019" name="MBio">
        <title>Identifying small proteins by ribosome profiling with stalled initiation complexes.</title>
        <authorList>
            <person name="Weaver J."/>
            <person name="Mohammad F."/>
            <person name="Buskirk A.R."/>
            <person name="Storz G."/>
        </authorList>
    </citation>
    <scope>POSSIBLE FUNCTION</scope>
    <scope>IDENTIFICATION</scope>
    <scope>INDUCTION</scope>
    <source>
        <strain>K12 / MG1655 / ATCC 47076</strain>
    </source>
</reference>
<sequence length="13" mass="1604">MNREEMHCDVVKI</sequence>
<gene>
    <name evidence="2" type="primary">pssL</name>
    <name evidence="3" type="ordered locus">b4782</name>
</gene>
<name>PSSL_ECOLI</name>
<accession>P0DSG0</accession>
<accession>A0A7H2C788</accession>
<comment type="function">
    <text evidence="1">May serve a regulatory role in expression of downstream gene pssA; in a pssL-pssA-lacZ fusion, mutation of the start codon of pssA to a stop codon in pssL decreases expression of beta-galactosidase, suggesting translation of the 2 genes is coupled.</text>
</comment>
<comment type="induction">
    <text evidence="1">A fusion of the 5' UTR and initial codons of the gene with lacZ allows expression of beta-galactosidase, suggesting this protein is expressed (at protein level).</text>
</comment>
<comment type="miscellaneous">
    <text evidence="1">This gene lies upstream of and overlaps pssA on the same strand in another reading frame.</text>
</comment>
<keyword id="KW-1185">Reference proteome</keyword>
<evidence type="ECO:0000269" key="1">
    <source>
    </source>
</evidence>
<evidence type="ECO:0000303" key="2">
    <source>
    </source>
</evidence>
<evidence type="ECO:0000312" key="3">
    <source>
        <dbReference type="EMBL" id="QNV50535.1"/>
    </source>
</evidence>
<organism>
    <name type="scientific">Escherichia coli (strain K12)</name>
    <dbReference type="NCBI Taxonomy" id="83333"/>
    <lineage>
        <taxon>Bacteria</taxon>
        <taxon>Pseudomonadati</taxon>
        <taxon>Pseudomonadota</taxon>
        <taxon>Gammaproteobacteria</taxon>
        <taxon>Enterobacterales</taxon>
        <taxon>Enterobacteriaceae</taxon>
        <taxon>Escherichia</taxon>
    </lineage>
</organism>